<organism>
    <name type="scientific">Arabidopsis thaliana</name>
    <name type="common">Mouse-ear cress</name>
    <dbReference type="NCBI Taxonomy" id="3702"/>
    <lineage>
        <taxon>Eukaryota</taxon>
        <taxon>Viridiplantae</taxon>
        <taxon>Streptophyta</taxon>
        <taxon>Embryophyta</taxon>
        <taxon>Tracheophyta</taxon>
        <taxon>Spermatophyta</taxon>
        <taxon>Magnoliopsida</taxon>
        <taxon>eudicotyledons</taxon>
        <taxon>Gunneridae</taxon>
        <taxon>Pentapetalae</taxon>
        <taxon>rosids</taxon>
        <taxon>malvids</taxon>
        <taxon>Brassicales</taxon>
        <taxon>Brassicaceae</taxon>
        <taxon>Camelineae</taxon>
        <taxon>Arabidopsis</taxon>
    </lineage>
</organism>
<feature type="transit peptide" description="Mitochondrion" evidence="2">
    <location>
        <begin position="1"/>
        <end position="35"/>
    </location>
</feature>
<feature type="chain" id="PRO_0000419505" description="External alternative NAD(P)H-ubiquinone oxidoreductase B1, mitochondrial">
    <location>
        <begin position="36"/>
        <end position="571"/>
    </location>
</feature>
<feature type="domain" description="EF-hand" evidence="3">
    <location>
        <begin position="372"/>
        <end position="407"/>
    </location>
</feature>
<feature type="short sequence motif" description="Microbody targeting signal">
    <location>
        <begin position="562"/>
        <end position="571"/>
    </location>
</feature>
<feature type="binding site" evidence="1">
    <location>
        <begin position="51"/>
        <end position="81"/>
    </location>
    <ligand>
        <name>FAD</name>
        <dbReference type="ChEBI" id="CHEBI:57692"/>
    </ligand>
</feature>
<feature type="binding site" evidence="1">
    <location>
        <begin position="215"/>
        <end position="251"/>
    </location>
    <ligand>
        <name>NAD(+)</name>
        <dbReference type="ChEBI" id="CHEBI:57540"/>
    </ligand>
</feature>
<feature type="binding site" evidence="3">
    <location>
        <position position="385"/>
    </location>
    <ligand>
        <name>Ca(2+)</name>
        <dbReference type="ChEBI" id="CHEBI:29108"/>
    </ligand>
</feature>
<feature type="binding site" evidence="3">
    <location>
        <position position="387"/>
    </location>
    <ligand>
        <name>Ca(2+)</name>
        <dbReference type="ChEBI" id="CHEBI:29108"/>
    </ligand>
</feature>
<feature type="binding site" evidence="3">
    <location>
        <position position="389"/>
    </location>
    <ligand>
        <name>Ca(2+)</name>
        <dbReference type="ChEBI" id="CHEBI:29108"/>
    </ligand>
</feature>
<feature type="binding site" evidence="3">
    <location>
        <position position="391"/>
    </location>
    <ligand>
        <name>Ca(2+)</name>
        <dbReference type="ChEBI" id="CHEBI:29108"/>
    </ligand>
</feature>
<feature type="binding site" evidence="3">
    <location>
        <position position="396"/>
    </location>
    <ligand>
        <name>Ca(2+)</name>
        <dbReference type="ChEBI" id="CHEBI:29108"/>
    </ligand>
</feature>
<feature type="mutagenesis site" description="Impaired calcium binding and loss of NADH oxidase activity." evidence="6">
    <original>D</original>
    <variation>A</variation>
    <location>
        <position position="387"/>
    </location>
</feature>
<feature type="sequence conflict" description="In Ref. 4; AAM63256." evidence="7" ref="4">
    <original>E</original>
    <variation>A</variation>
    <location>
        <position position="39"/>
    </location>
</feature>
<feature type="sequence conflict" description="In Ref. 4; AAM63256." evidence="7" ref="4">
    <original>L</original>
    <variation>I</variation>
    <location>
        <position position="175"/>
    </location>
</feature>
<feature type="sequence conflict" description="In Ref. 4; AAM63256." evidence="7" ref="4">
    <original>A</original>
    <variation>V</variation>
    <location>
        <position position="386"/>
    </location>
</feature>
<feature type="sequence conflict" description="In Ref. 4; AAM63256." evidence="7" ref="4">
    <original>V</original>
    <variation>I</variation>
    <location>
        <position position="540"/>
    </location>
</feature>
<comment type="function">
    <text evidence="1 6">Alternative NADH-ubiquinone oxidoreductase which catalyzes the oxidation of mitochondrial NADH does not translocate protons across the inner mitochondrial membrane (By similarity). Calcium-dependent NAD(P)H dehydrogenase. Binds calcium ions.</text>
</comment>
<comment type="catalytic activity">
    <reaction>
        <text>a quinone + NADH + H(+) = a quinol + NAD(+)</text>
        <dbReference type="Rhea" id="RHEA:46160"/>
        <dbReference type="ChEBI" id="CHEBI:15378"/>
        <dbReference type="ChEBI" id="CHEBI:24646"/>
        <dbReference type="ChEBI" id="CHEBI:57540"/>
        <dbReference type="ChEBI" id="CHEBI:57945"/>
        <dbReference type="ChEBI" id="CHEBI:132124"/>
        <dbReference type="EC" id="1.6.5.9"/>
    </reaction>
</comment>
<comment type="catalytic activity">
    <reaction>
        <text>a ubiquinone + NADH + H(+) = a ubiquinol + NAD(+)</text>
        <dbReference type="Rhea" id="RHEA:23152"/>
        <dbReference type="Rhea" id="RHEA-COMP:9565"/>
        <dbReference type="Rhea" id="RHEA-COMP:9566"/>
        <dbReference type="ChEBI" id="CHEBI:15378"/>
        <dbReference type="ChEBI" id="CHEBI:16389"/>
        <dbReference type="ChEBI" id="CHEBI:17976"/>
        <dbReference type="ChEBI" id="CHEBI:57540"/>
        <dbReference type="ChEBI" id="CHEBI:57945"/>
    </reaction>
</comment>
<comment type="cofactor">
    <cofactor evidence="1">
        <name>FAD</name>
        <dbReference type="ChEBI" id="CHEBI:57692"/>
    </cofactor>
    <text evidence="1">Binds 1 FAD per subunit.</text>
</comment>
<comment type="activity regulation">
    <text evidence="6">Activity is calcium-dependent with a more pronounced effect at higher pH.</text>
</comment>
<comment type="biophysicochemical properties">
    <phDependence>
        <text evidence="6">Optimum pH is 6.8-7.2 with NADPH as substrate and 6.8 with NADH as substrate.</text>
    </phDependence>
</comment>
<comment type="subcellular location">
    <subcellularLocation>
        <location>Mitochondrion inner membrane</location>
        <topology>Peripheral membrane protein</topology>
        <orientation>Intermembrane side</orientation>
    </subcellularLocation>
    <subcellularLocation>
        <location>Peroxisome</location>
    </subcellularLocation>
</comment>
<comment type="tissue specificity">
    <text evidence="4 5">Expressed in seedlings, roots, cotyledons, leaves, stems, buds and flowers.</text>
</comment>
<comment type="similarity">
    <text evidence="7">Belongs to the NADH dehydrogenase family.</text>
</comment>
<comment type="sequence caution" evidence="7">
    <conflict type="erroneous gene model prediction">
        <sequence resource="EMBL-CDS" id="CAB79624"/>
    </conflict>
</comment>
<name>NDB1_ARATH</name>
<protein>
    <recommendedName>
        <fullName>External alternative NAD(P)H-ubiquinone oxidoreductase B1, mitochondrial</fullName>
        <ecNumber>1.6.5.9</ecNumber>
    </recommendedName>
    <alternativeName>
        <fullName>External alternative NADH dehydrogenase NDB1</fullName>
    </alternativeName>
    <alternativeName>
        <fullName>NADH:ubiquinone reductase (non-electrogenic) NDB1</fullName>
    </alternativeName>
</protein>
<keyword id="KW-0106">Calcium</keyword>
<keyword id="KW-0274">FAD</keyword>
<keyword id="KW-0285">Flavoprotein</keyword>
<keyword id="KW-0472">Membrane</keyword>
<keyword id="KW-0479">Metal-binding</keyword>
<keyword id="KW-0496">Mitochondrion</keyword>
<keyword id="KW-0999">Mitochondrion inner membrane</keyword>
<keyword id="KW-0520">NAD</keyword>
<keyword id="KW-0521">NADP</keyword>
<keyword id="KW-0560">Oxidoreductase</keyword>
<keyword id="KW-0576">Peroxisome</keyword>
<keyword id="KW-1185">Reference proteome</keyword>
<keyword id="KW-0809">Transit peptide</keyword>
<dbReference type="EC" id="1.6.5.9"/>
<dbReference type="EMBL" id="AL161572">
    <property type="protein sequence ID" value="CAB79624.1"/>
    <property type="status" value="ALT_SEQ"/>
    <property type="molecule type" value="Genomic_DNA"/>
</dbReference>
<dbReference type="EMBL" id="CP002687">
    <property type="protein sequence ID" value="AEE85455.1"/>
    <property type="molecule type" value="Genomic_DNA"/>
</dbReference>
<dbReference type="EMBL" id="BT025339">
    <property type="protein sequence ID" value="ABF57295.1"/>
    <property type="molecule type" value="mRNA"/>
</dbReference>
<dbReference type="EMBL" id="AY086046">
    <property type="protein sequence ID" value="AAM63256.1"/>
    <property type="molecule type" value="mRNA"/>
</dbReference>
<dbReference type="PIR" id="T09038">
    <property type="entry name" value="T09038"/>
</dbReference>
<dbReference type="RefSeq" id="NP_567801.1">
    <property type="nucleotide sequence ID" value="NM_118962.5"/>
</dbReference>
<dbReference type="SMR" id="Q1JPL4"/>
<dbReference type="FunCoup" id="Q1JPL4">
    <property type="interactions" value="832"/>
</dbReference>
<dbReference type="STRING" id="3702.Q1JPL4"/>
<dbReference type="GlyGen" id="Q1JPL4">
    <property type="glycosylation" value="1 site"/>
</dbReference>
<dbReference type="SwissPalm" id="Q1JPL4"/>
<dbReference type="PaxDb" id="3702-AT4G28220.1"/>
<dbReference type="ProteomicsDB" id="236817"/>
<dbReference type="EnsemblPlants" id="AT4G28220.1">
    <property type="protein sequence ID" value="AT4G28220.1"/>
    <property type="gene ID" value="AT4G28220"/>
</dbReference>
<dbReference type="GeneID" id="828937"/>
<dbReference type="Gramene" id="AT4G28220.1">
    <property type="protein sequence ID" value="AT4G28220.1"/>
    <property type="gene ID" value="AT4G28220"/>
</dbReference>
<dbReference type="KEGG" id="ath:AT4G28220"/>
<dbReference type="Araport" id="AT4G28220"/>
<dbReference type="TAIR" id="AT4G28220">
    <property type="gene designation" value="NDB1"/>
</dbReference>
<dbReference type="eggNOG" id="KOG2495">
    <property type="taxonomic scope" value="Eukaryota"/>
</dbReference>
<dbReference type="HOGENOM" id="CLU_021377_1_0_1"/>
<dbReference type="InParanoid" id="Q1JPL4"/>
<dbReference type="PhylomeDB" id="Q1JPL4"/>
<dbReference type="BioCyc" id="ARA:AT4G28220-MONOMER"/>
<dbReference type="PRO" id="PR:Q1JPL4"/>
<dbReference type="Proteomes" id="UP000006548">
    <property type="component" value="Chromosome 4"/>
</dbReference>
<dbReference type="ExpressionAtlas" id="Q1JPL4">
    <property type="expression patterns" value="baseline and differential"/>
</dbReference>
<dbReference type="GO" id="GO:0031314">
    <property type="term" value="C:extrinsic component of mitochondrial inner membrane"/>
    <property type="evidence" value="ECO:0000314"/>
    <property type="project" value="TAIR"/>
</dbReference>
<dbReference type="GO" id="GO:0005758">
    <property type="term" value="C:mitochondrial intermembrane space"/>
    <property type="evidence" value="ECO:0000250"/>
    <property type="project" value="UniProtKB"/>
</dbReference>
<dbReference type="GO" id="GO:0005739">
    <property type="term" value="C:mitochondrion"/>
    <property type="evidence" value="ECO:0000314"/>
    <property type="project" value="UniProtKB"/>
</dbReference>
<dbReference type="GO" id="GO:0005777">
    <property type="term" value="C:peroxisome"/>
    <property type="evidence" value="ECO:0000314"/>
    <property type="project" value="UniProtKB"/>
</dbReference>
<dbReference type="GO" id="GO:0005509">
    <property type="term" value="F:calcium ion binding"/>
    <property type="evidence" value="ECO:0007669"/>
    <property type="project" value="InterPro"/>
</dbReference>
<dbReference type="GO" id="GO:0050136">
    <property type="term" value="F:NADH:ubiquinone reductase (non-electrogenic) activity"/>
    <property type="evidence" value="ECO:0007669"/>
    <property type="project" value="UniProtKB-EC"/>
</dbReference>
<dbReference type="GO" id="GO:0003959">
    <property type="term" value="F:NADPH dehydrogenase activity"/>
    <property type="evidence" value="ECO:0000315"/>
    <property type="project" value="TAIR"/>
</dbReference>
<dbReference type="GO" id="GO:0016491">
    <property type="term" value="F:oxidoreductase activity"/>
    <property type="evidence" value="ECO:0000250"/>
    <property type="project" value="UniProtKB"/>
</dbReference>
<dbReference type="FunFam" id="3.50.50.100:FF:000002">
    <property type="entry name" value="External alternative NAD(P)H-ubiquinone oxidoreductase B1, mitochondrial"/>
    <property type="match status" value="1"/>
</dbReference>
<dbReference type="FunFam" id="3.50.50.100:FF:000008">
    <property type="entry name" value="External alternative NAD(P)H-ubiquinone oxidoreductase B1, mitochondrial"/>
    <property type="match status" value="1"/>
</dbReference>
<dbReference type="Gene3D" id="3.50.50.100">
    <property type="match status" value="2"/>
</dbReference>
<dbReference type="InterPro" id="IPR011992">
    <property type="entry name" value="EF-hand-dom_pair"/>
</dbReference>
<dbReference type="InterPro" id="IPR018247">
    <property type="entry name" value="EF_Hand_1_Ca_BS"/>
</dbReference>
<dbReference type="InterPro" id="IPR002048">
    <property type="entry name" value="EF_hand_dom"/>
</dbReference>
<dbReference type="InterPro" id="IPR036188">
    <property type="entry name" value="FAD/NAD-bd_sf"/>
</dbReference>
<dbReference type="InterPro" id="IPR023753">
    <property type="entry name" value="FAD/NAD-binding_dom"/>
</dbReference>
<dbReference type="InterPro" id="IPR045024">
    <property type="entry name" value="NDH-2"/>
</dbReference>
<dbReference type="InterPro" id="IPR054585">
    <property type="entry name" value="NDH2-like_C"/>
</dbReference>
<dbReference type="PANTHER" id="PTHR43706:SF3">
    <property type="entry name" value="EXTERNAL ALTERNATIVE NAD(P)H-UBIQUINONE OXIDOREDUCTASE B1, MITOCHONDRIAL"/>
    <property type="match status" value="1"/>
</dbReference>
<dbReference type="PANTHER" id="PTHR43706">
    <property type="entry name" value="NADH DEHYDROGENASE"/>
    <property type="match status" value="1"/>
</dbReference>
<dbReference type="Pfam" id="PF22366">
    <property type="entry name" value="NDH2_C"/>
    <property type="match status" value="1"/>
</dbReference>
<dbReference type="Pfam" id="PF07992">
    <property type="entry name" value="Pyr_redox_2"/>
    <property type="match status" value="1"/>
</dbReference>
<dbReference type="PRINTS" id="PR00368">
    <property type="entry name" value="FADPNR"/>
</dbReference>
<dbReference type="PRINTS" id="PR00469">
    <property type="entry name" value="PNDRDTASEII"/>
</dbReference>
<dbReference type="SUPFAM" id="SSF47473">
    <property type="entry name" value="EF-hand"/>
    <property type="match status" value="1"/>
</dbReference>
<dbReference type="SUPFAM" id="SSF51905">
    <property type="entry name" value="FAD/NAD(P)-binding domain"/>
    <property type="match status" value="2"/>
</dbReference>
<dbReference type="PROSITE" id="PS00018">
    <property type="entry name" value="EF_HAND_1"/>
    <property type="match status" value="1"/>
</dbReference>
<dbReference type="PROSITE" id="PS50222">
    <property type="entry name" value="EF_HAND_2"/>
    <property type="match status" value="1"/>
</dbReference>
<evidence type="ECO:0000250" key="1"/>
<evidence type="ECO:0000255" key="2"/>
<evidence type="ECO:0000255" key="3">
    <source>
        <dbReference type="PROSITE-ProRule" id="PRU00448"/>
    </source>
</evidence>
<evidence type="ECO:0000269" key="4">
    <source>
    </source>
</evidence>
<evidence type="ECO:0000269" key="5">
    <source>
    </source>
</evidence>
<evidence type="ECO:0000269" key="6">
    <source>
    </source>
</evidence>
<evidence type="ECO:0000305" key="7"/>
<proteinExistence type="evidence at protein level"/>
<gene>
    <name type="primary">NDB1</name>
    <name type="ordered locus">At4g28220</name>
    <name type="ORF">F26K10.100</name>
</gene>
<sequence>MTLLSSLGRASRSAPLASKLLLLGTLSGGSIVAYADANEEANKKEEHKKKKVVVLGTGWAGISFLKDLDITSYDVQVVSPQNYFAFTPLLPSVTCGTVEARSIVESVRNITKKKNGEIELWEADCFKIDHVNQKVHCRPVFKDDPEASQEFSLGYDYLIVAVGAQVNTFGTPGVLENCHFLKEVEDAQRIRRGVIDCFEKAILPGLTEEQRRRKLHFVIVGGGPTGVEFAAELHDFIIEDITKIYPSVKELVKITLIQSGDHILNTFDERISSFAEQKFTRDGIDVQTGMRVMSVTDKDITVKVKSSGELVSIPHGLILWSTGVGTRPVISDFMEQVGQGGRRAVATNEWLQVTGCENVYAVGDCASIAQRKILGDIANIFKAADADNSGTLTMEELEGVVDDIIVRYPQVELYLKSKHMRHINDLLADSEGNARKEVDIEAFKLALSEADSQMKTLPATAQVAAQQGAYLAKCFNRMEQCKELPEGPKRFRTGGHHQFRPFQYKHFGQFAPLGGDQAAAELPGDWVSAGKSAQWLWYSVYASKQVSWRTRALVVSDWTRRYIFGRDSSRI</sequence>
<reference key="1">
    <citation type="journal article" date="1999" name="Nature">
        <title>Sequence and analysis of chromosome 4 of the plant Arabidopsis thaliana.</title>
        <authorList>
            <person name="Mayer K.F.X."/>
            <person name="Schueller C."/>
            <person name="Wambutt R."/>
            <person name="Murphy G."/>
            <person name="Volckaert G."/>
            <person name="Pohl T."/>
            <person name="Duesterhoeft A."/>
            <person name="Stiekema W."/>
            <person name="Entian K.-D."/>
            <person name="Terryn N."/>
            <person name="Harris B."/>
            <person name="Ansorge W."/>
            <person name="Brandt P."/>
            <person name="Grivell L.A."/>
            <person name="Rieger M."/>
            <person name="Weichselgartner M."/>
            <person name="de Simone V."/>
            <person name="Obermaier B."/>
            <person name="Mache R."/>
            <person name="Mueller M."/>
            <person name="Kreis M."/>
            <person name="Delseny M."/>
            <person name="Puigdomenech P."/>
            <person name="Watson M."/>
            <person name="Schmidtheini T."/>
            <person name="Reichert B."/>
            <person name="Portetelle D."/>
            <person name="Perez-Alonso M."/>
            <person name="Boutry M."/>
            <person name="Bancroft I."/>
            <person name="Vos P."/>
            <person name="Hoheisel J."/>
            <person name="Zimmermann W."/>
            <person name="Wedler H."/>
            <person name="Ridley P."/>
            <person name="Langham S.-A."/>
            <person name="McCullagh B."/>
            <person name="Bilham L."/>
            <person name="Robben J."/>
            <person name="van der Schueren J."/>
            <person name="Grymonprez B."/>
            <person name="Chuang Y.-J."/>
            <person name="Vandenbussche F."/>
            <person name="Braeken M."/>
            <person name="Weltjens I."/>
            <person name="Voet M."/>
            <person name="Bastiaens I."/>
            <person name="Aert R."/>
            <person name="Defoor E."/>
            <person name="Weitzenegger T."/>
            <person name="Bothe G."/>
            <person name="Ramsperger U."/>
            <person name="Hilbert H."/>
            <person name="Braun M."/>
            <person name="Holzer E."/>
            <person name="Brandt A."/>
            <person name="Peters S."/>
            <person name="van Staveren M."/>
            <person name="Dirkse W."/>
            <person name="Mooijman P."/>
            <person name="Klein Lankhorst R."/>
            <person name="Rose M."/>
            <person name="Hauf J."/>
            <person name="Koetter P."/>
            <person name="Berneiser S."/>
            <person name="Hempel S."/>
            <person name="Feldpausch M."/>
            <person name="Lamberth S."/>
            <person name="Van den Daele H."/>
            <person name="De Keyser A."/>
            <person name="Buysshaert C."/>
            <person name="Gielen J."/>
            <person name="Villarroel R."/>
            <person name="De Clercq R."/>
            <person name="van Montagu M."/>
            <person name="Rogers J."/>
            <person name="Cronin A."/>
            <person name="Quail M.A."/>
            <person name="Bray-Allen S."/>
            <person name="Clark L."/>
            <person name="Doggett J."/>
            <person name="Hall S."/>
            <person name="Kay M."/>
            <person name="Lennard N."/>
            <person name="McLay K."/>
            <person name="Mayes R."/>
            <person name="Pettett A."/>
            <person name="Rajandream M.A."/>
            <person name="Lyne M."/>
            <person name="Benes V."/>
            <person name="Rechmann S."/>
            <person name="Borkova D."/>
            <person name="Bloecker H."/>
            <person name="Scharfe M."/>
            <person name="Grimm M."/>
            <person name="Loehnert T.-H."/>
            <person name="Dose S."/>
            <person name="de Haan M."/>
            <person name="Maarse A.C."/>
            <person name="Schaefer M."/>
            <person name="Mueller-Auer S."/>
            <person name="Gabel C."/>
            <person name="Fuchs M."/>
            <person name="Fartmann B."/>
            <person name="Granderath K."/>
            <person name="Dauner D."/>
            <person name="Herzl A."/>
            <person name="Neumann S."/>
            <person name="Argiriou A."/>
            <person name="Vitale D."/>
            <person name="Liguori R."/>
            <person name="Piravandi E."/>
            <person name="Massenet O."/>
            <person name="Quigley F."/>
            <person name="Clabauld G."/>
            <person name="Muendlein A."/>
            <person name="Felber R."/>
            <person name="Schnabl S."/>
            <person name="Hiller R."/>
            <person name="Schmidt W."/>
            <person name="Lecharny A."/>
            <person name="Aubourg S."/>
            <person name="Chefdor F."/>
            <person name="Cooke R."/>
            <person name="Berger C."/>
            <person name="Monfort A."/>
            <person name="Casacuberta E."/>
            <person name="Gibbons T."/>
            <person name="Weber N."/>
            <person name="Vandenbol M."/>
            <person name="Bargues M."/>
            <person name="Terol J."/>
            <person name="Torres A."/>
            <person name="Perez-Perez A."/>
            <person name="Purnelle B."/>
            <person name="Bent E."/>
            <person name="Johnson S."/>
            <person name="Tacon D."/>
            <person name="Jesse T."/>
            <person name="Heijnen L."/>
            <person name="Schwarz S."/>
            <person name="Scholler P."/>
            <person name="Heber S."/>
            <person name="Francs P."/>
            <person name="Bielke C."/>
            <person name="Frishman D."/>
            <person name="Haase D."/>
            <person name="Lemcke K."/>
            <person name="Mewes H.-W."/>
            <person name="Stocker S."/>
            <person name="Zaccaria P."/>
            <person name="Bevan M."/>
            <person name="Wilson R.K."/>
            <person name="de la Bastide M."/>
            <person name="Habermann K."/>
            <person name="Parnell L."/>
            <person name="Dedhia N."/>
            <person name="Gnoj L."/>
            <person name="Schutz K."/>
            <person name="Huang E."/>
            <person name="Spiegel L."/>
            <person name="Sekhon M."/>
            <person name="Murray J."/>
            <person name="Sheet P."/>
            <person name="Cordes M."/>
            <person name="Abu-Threideh J."/>
            <person name="Stoneking T."/>
            <person name="Kalicki J."/>
            <person name="Graves T."/>
            <person name="Harmon G."/>
            <person name="Edwards J."/>
            <person name="Latreille P."/>
            <person name="Courtney L."/>
            <person name="Cloud J."/>
            <person name="Abbott A."/>
            <person name="Scott K."/>
            <person name="Johnson D."/>
            <person name="Minx P."/>
            <person name="Bentley D."/>
            <person name="Fulton B."/>
            <person name="Miller N."/>
            <person name="Greco T."/>
            <person name="Kemp K."/>
            <person name="Kramer J."/>
            <person name="Fulton L."/>
            <person name="Mardis E."/>
            <person name="Dante M."/>
            <person name="Pepin K."/>
            <person name="Hillier L.W."/>
            <person name="Nelson J."/>
            <person name="Spieth J."/>
            <person name="Ryan E."/>
            <person name="Andrews S."/>
            <person name="Geisel C."/>
            <person name="Layman D."/>
            <person name="Du H."/>
            <person name="Ali J."/>
            <person name="Berghoff A."/>
            <person name="Jones K."/>
            <person name="Drone K."/>
            <person name="Cotton M."/>
            <person name="Joshu C."/>
            <person name="Antonoiu B."/>
            <person name="Zidanic M."/>
            <person name="Strong C."/>
            <person name="Sun H."/>
            <person name="Lamar B."/>
            <person name="Yordan C."/>
            <person name="Ma P."/>
            <person name="Zhong J."/>
            <person name="Preston R."/>
            <person name="Vil D."/>
            <person name="Shekher M."/>
            <person name="Matero A."/>
            <person name="Shah R."/>
            <person name="Swaby I.K."/>
            <person name="O'Shaughnessy A."/>
            <person name="Rodriguez M."/>
            <person name="Hoffman J."/>
            <person name="Till S."/>
            <person name="Granat S."/>
            <person name="Shohdy N."/>
            <person name="Hasegawa A."/>
            <person name="Hameed A."/>
            <person name="Lodhi M."/>
            <person name="Johnson A."/>
            <person name="Chen E."/>
            <person name="Marra M.A."/>
            <person name="Martienssen R."/>
            <person name="McCombie W.R."/>
        </authorList>
    </citation>
    <scope>NUCLEOTIDE SEQUENCE [LARGE SCALE GENOMIC DNA]</scope>
    <source>
        <strain>cv. Columbia</strain>
    </source>
</reference>
<reference key="2">
    <citation type="journal article" date="2017" name="Plant J.">
        <title>Araport11: a complete reannotation of the Arabidopsis thaliana reference genome.</title>
        <authorList>
            <person name="Cheng C.Y."/>
            <person name="Krishnakumar V."/>
            <person name="Chan A.P."/>
            <person name="Thibaud-Nissen F."/>
            <person name="Schobel S."/>
            <person name="Town C.D."/>
        </authorList>
    </citation>
    <scope>GENOME REANNOTATION</scope>
    <source>
        <strain>cv. Columbia</strain>
    </source>
</reference>
<reference key="3">
    <citation type="submission" date="2006-05" db="EMBL/GenBank/DDBJ databases">
        <title>Arabidopsis ORF clones.</title>
        <authorList>
            <person name="Shinn P."/>
            <person name="Chen H."/>
            <person name="Kim C.J."/>
            <person name="Quinitio C."/>
            <person name="Ecker J.R."/>
        </authorList>
    </citation>
    <scope>NUCLEOTIDE SEQUENCE [LARGE SCALE MRNA]</scope>
</reference>
<reference key="4">
    <citation type="submission" date="2002-03" db="EMBL/GenBank/DDBJ databases">
        <title>Full-length cDNA from Arabidopsis thaliana.</title>
        <authorList>
            <person name="Brover V.V."/>
            <person name="Troukhan M.E."/>
            <person name="Alexandrov N.A."/>
            <person name="Lu Y.-P."/>
            <person name="Flavell R.B."/>
            <person name="Feldmann K.A."/>
        </authorList>
    </citation>
    <scope>NUCLEOTIDE SEQUENCE [LARGE SCALE MRNA]</scope>
</reference>
<reference key="5">
    <citation type="journal article" date="2003" name="Plant Physiol.">
        <title>Arabidopsis genes encoding mitochondrial type II NAD(P)H dehydrogenases have different evolutionary origin and show distinct responses to light.</title>
        <authorList>
            <person name="Michalecka A.M."/>
            <person name="Svensson A.S."/>
            <person name="Johansson F.I."/>
            <person name="Agius S.C."/>
            <person name="Johanson U."/>
            <person name="Brennicke A."/>
            <person name="Binder S."/>
            <person name="Rasmusson A.G."/>
        </authorList>
    </citation>
    <scope>SUBCELLULAR LOCATION</scope>
    <scope>TISSUE SPECIFICITY</scope>
</reference>
<reference key="6">
    <citation type="journal article" date="2004" name="Annu. Rev. Plant Biol.">
        <title>Alternative NAD(P)H dehydrogenases of plant mitochondria.</title>
        <authorList>
            <person name="Rasmusson A.G."/>
            <person name="Soole K.L."/>
            <person name="Elthon T.E."/>
        </authorList>
    </citation>
    <scope>REVIEW</scope>
</reference>
<reference key="7">
    <citation type="journal article" date="2006" name="Plant Cell Physiol.">
        <title>Characterization of mitochondrial alternative NAD(P)H dehydrogenases in Arabidopsis: intraorganelle location and expression.</title>
        <authorList>
            <person name="Elhafez D."/>
            <person name="Murcha M.W."/>
            <person name="Clifton R."/>
            <person name="Soole K.L."/>
            <person name="Day D.A."/>
            <person name="Whelan J."/>
        </authorList>
    </citation>
    <scope>SUBCELLULAR LOCATION</scope>
    <scope>TISSUE SPECIFICITY</scope>
    <source>
        <strain>cv. Columbia</strain>
    </source>
</reference>
<reference key="8">
    <citation type="journal article" date="2007" name="J. Biol. Chem.">
        <title>Ca2+-binding and Ca2+-independent respiratory NADH and NADPH dehydrogenases of Arabidopsis thaliana.</title>
        <authorList>
            <person name="Geisler D.A."/>
            <person name="Broselid C."/>
            <person name="Hederstedt L."/>
            <person name="Rasmusson A.G."/>
        </authorList>
    </citation>
    <scope>FUNCTION</scope>
    <scope>MUTAGENESIS OF ASP-387</scope>
    <scope>ACTIVITY REGULATION</scope>
    <scope>CALCIUM-BINDING</scope>
    <scope>BIOPHYSICOCHEMICAL PROPERTIES</scope>
</reference>
<reference key="9">
    <citation type="journal article" date="2008" name="FEBS Lett.">
        <title>Type II NAD(P)H dehydrogenases are targeted to mitochondria and chloroplasts or peroxisomes in Arabidopsis thaliana.</title>
        <authorList>
            <person name="Carrie C."/>
            <person name="Murcha M.W."/>
            <person name="Kuehn K."/>
            <person name="Duncan O."/>
            <person name="Barthet M."/>
            <person name="Smith P.M."/>
            <person name="Eubel H."/>
            <person name="Meyer E."/>
            <person name="Day D.A."/>
            <person name="Millar A.H."/>
            <person name="Whelan J."/>
        </authorList>
    </citation>
    <scope>SUBCELLULAR LOCATION</scope>
    <scope>MICROBODY TARGETING SIGNAL</scope>
</reference>
<accession>Q1JPL4</accession>
<accession>Q8LDE7</accession>
<accession>Q9M0I5</accession>